<comment type="function">
    <text evidence="2">Probably has thioredoxin reductase-like oxidoreductase activity.</text>
</comment>
<comment type="catalytic activity">
    <reaction evidence="2">
        <text>[thioredoxin]-dithiol + NADP(+) = [thioredoxin]-disulfide + NADPH + H(+)</text>
        <dbReference type="Rhea" id="RHEA:20345"/>
        <dbReference type="Rhea" id="RHEA-COMP:10698"/>
        <dbReference type="Rhea" id="RHEA-COMP:10700"/>
        <dbReference type="ChEBI" id="CHEBI:15378"/>
        <dbReference type="ChEBI" id="CHEBI:29950"/>
        <dbReference type="ChEBI" id="CHEBI:50058"/>
        <dbReference type="ChEBI" id="CHEBI:57783"/>
        <dbReference type="ChEBI" id="CHEBI:58349"/>
        <dbReference type="EC" id="1.8.1.9"/>
    </reaction>
</comment>
<comment type="similarity">
    <text evidence="2">Belongs to the SelWTH family. SELT subfamily.</text>
</comment>
<reference key="1">
    <citation type="journal article" date="2000" name="Science">
        <title>The genome sequence of Drosophila melanogaster.</title>
        <authorList>
            <person name="Adams M.D."/>
            <person name="Celniker S.E."/>
            <person name="Holt R.A."/>
            <person name="Evans C.A."/>
            <person name="Gocayne J.D."/>
            <person name="Amanatides P.G."/>
            <person name="Scherer S.E."/>
            <person name="Li P.W."/>
            <person name="Hoskins R.A."/>
            <person name="Galle R.F."/>
            <person name="George R.A."/>
            <person name="Lewis S.E."/>
            <person name="Richards S."/>
            <person name="Ashburner M."/>
            <person name="Henderson S.N."/>
            <person name="Sutton G.G."/>
            <person name="Wortman J.R."/>
            <person name="Yandell M.D."/>
            <person name="Zhang Q."/>
            <person name="Chen L.X."/>
            <person name="Brandon R.C."/>
            <person name="Rogers Y.-H.C."/>
            <person name="Blazej R.G."/>
            <person name="Champe M."/>
            <person name="Pfeiffer B.D."/>
            <person name="Wan K.H."/>
            <person name="Doyle C."/>
            <person name="Baxter E.G."/>
            <person name="Helt G."/>
            <person name="Nelson C.R."/>
            <person name="Miklos G.L.G."/>
            <person name="Abril J.F."/>
            <person name="Agbayani A."/>
            <person name="An H.-J."/>
            <person name="Andrews-Pfannkoch C."/>
            <person name="Baldwin D."/>
            <person name="Ballew R.M."/>
            <person name="Basu A."/>
            <person name="Baxendale J."/>
            <person name="Bayraktaroglu L."/>
            <person name="Beasley E.M."/>
            <person name="Beeson K.Y."/>
            <person name="Benos P.V."/>
            <person name="Berman B.P."/>
            <person name="Bhandari D."/>
            <person name="Bolshakov S."/>
            <person name="Borkova D."/>
            <person name="Botchan M.R."/>
            <person name="Bouck J."/>
            <person name="Brokstein P."/>
            <person name="Brottier P."/>
            <person name="Burtis K.C."/>
            <person name="Busam D.A."/>
            <person name="Butler H."/>
            <person name="Cadieu E."/>
            <person name="Center A."/>
            <person name="Chandra I."/>
            <person name="Cherry J.M."/>
            <person name="Cawley S."/>
            <person name="Dahlke C."/>
            <person name="Davenport L.B."/>
            <person name="Davies P."/>
            <person name="de Pablos B."/>
            <person name="Delcher A."/>
            <person name="Deng Z."/>
            <person name="Mays A.D."/>
            <person name="Dew I."/>
            <person name="Dietz S.M."/>
            <person name="Dodson K."/>
            <person name="Doup L.E."/>
            <person name="Downes M."/>
            <person name="Dugan-Rocha S."/>
            <person name="Dunkov B.C."/>
            <person name="Dunn P."/>
            <person name="Durbin K.J."/>
            <person name="Evangelista C.C."/>
            <person name="Ferraz C."/>
            <person name="Ferriera S."/>
            <person name="Fleischmann W."/>
            <person name="Fosler C."/>
            <person name="Gabrielian A.E."/>
            <person name="Garg N.S."/>
            <person name="Gelbart W.M."/>
            <person name="Glasser K."/>
            <person name="Glodek A."/>
            <person name="Gong F."/>
            <person name="Gorrell J.H."/>
            <person name="Gu Z."/>
            <person name="Guan P."/>
            <person name="Harris M."/>
            <person name="Harris N.L."/>
            <person name="Harvey D.A."/>
            <person name="Heiman T.J."/>
            <person name="Hernandez J.R."/>
            <person name="Houck J."/>
            <person name="Hostin D."/>
            <person name="Houston K.A."/>
            <person name="Howland T.J."/>
            <person name="Wei M.-H."/>
            <person name="Ibegwam C."/>
            <person name="Jalali M."/>
            <person name="Kalush F."/>
            <person name="Karpen G.H."/>
            <person name="Ke Z."/>
            <person name="Kennison J.A."/>
            <person name="Ketchum K.A."/>
            <person name="Kimmel B.E."/>
            <person name="Kodira C.D."/>
            <person name="Kraft C.L."/>
            <person name="Kravitz S."/>
            <person name="Kulp D."/>
            <person name="Lai Z."/>
            <person name="Lasko P."/>
            <person name="Lei Y."/>
            <person name="Levitsky A.A."/>
            <person name="Li J.H."/>
            <person name="Li Z."/>
            <person name="Liang Y."/>
            <person name="Lin X."/>
            <person name="Liu X."/>
            <person name="Mattei B."/>
            <person name="McIntosh T.C."/>
            <person name="McLeod M.P."/>
            <person name="McPherson D."/>
            <person name="Merkulov G."/>
            <person name="Milshina N.V."/>
            <person name="Mobarry C."/>
            <person name="Morris J."/>
            <person name="Moshrefi A."/>
            <person name="Mount S.M."/>
            <person name="Moy M."/>
            <person name="Murphy B."/>
            <person name="Murphy L."/>
            <person name="Muzny D.M."/>
            <person name="Nelson D.L."/>
            <person name="Nelson D.R."/>
            <person name="Nelson K.A."/>
            <person name="Nixon K."/>
            <person name="Nusskern D.R."/>
            <person name="Pacleb J.M."/>
            <person name="Palazzolo M."/>
            <person name="Pittman G.S."/>
            <person name="Pan S."/>
            <person name="Pollard J."/>
            <person name="Puri V."/>
            <person name="Reese M.G."/>
            <person name="Reinert K."/>
            <person name="Remington K."/>
            <person name="Saunders R.D.C."/>
            <person name="Scheeler F."/>
            <person name="Shen H."/>
            <person name="Shue B.C."/>
            <person name="Siden-Kiamos I."/>
            <person name="Simpson M."/>
            <person name="Skupski M.P."/>
            <person name="Smith T.J."/>
            <person name="Spier E."/>
            <person name="Spradling A.C."/>
            <person name="Stapleton M."/>
            <person name="Strong R."/>
            <person name="Sun E."/>
            <person name="Svirskas R."/>
            <person name="Tector C."/>
            <person name="Turner R."/>
            <person name="Venter E."/>
            <person name="Wang A.H."/>
            <person name="Wang X."/>
            <person name="Wang Z.-Y."/>
            <person name="Wassarman D.A."/>
            <person name="Weinstock G.M."/>
            <person name="Weissenbach J."/>
            <person name="Williams S.M."/>
            <person name="Woodage T."/>
            <person name="Worley K.C."/>
            <person name="Wu D."/>
            <person name="Yang S."/>
            <person name="Yao Q.A."/>
            <person name="Ye J."/>
            <person name="Yeh R.-F."/>
            <person name="Zaveri J.S."/>
            <person name="Zhan M."/>
            <person name="Zhang G."/>
            <person name="Zhao Q."/>
            <person name="Zheng L."/>
            <person name="Zheng X.H."/>
            <person name="Zhong F.N."/>
            <person name="Zhong W."/>
            <person name="Zhou X."/>
            <person name="Zhu S.C."/>
            <person name="Zhu X."/>
            <person name="Smith H.O."/>
            <person name="Gibbs R.A."/>
            <person name="Myers E.W."/>
            <person name="Rubin G.M."/>
            <person name="Venter J.C."/>
        </authorList>
    </citation>
    <scope>NUCLEOTIDE SEQUENCE [LARGE SCALE GENOMIC DNA]</scope>
    <source>
        <strain>Berkeley</strain>
    </source>
</reference>
<reference key="2">
    <citation type="journal article" date="2002" name="Genome Biol.">
        <title>Annotation of the Drosophila melanogaster euchromatic genome: a systematic review.</title>
        <authorList>
            <person name="Misra S."/>
            <person name="Crosby M.A."/>
            <person name="Mungall C.J."/>
            <person name="Matthews B.B."/>
            <person name="Campbell K.S."/>
            <person name="Hradecky P."/>
            <person name="Huang Y."/>
            <person name="Kaminker J.S."/>
            <person name="Millburn G.H."/>
            <person name="Prochnik S.E."/>
            <person name="Smith C.D."/>
            <person name="Tupy J.L."/>
            <person name="Whitfield E.J."/>
            <person name="Bayraktaroglu L."/>
            <person name="Berman B.P."/>
            <person name="Bettencourt B.R."/>
            <person name="Celniker S.E."/>
            <person name="de Grey A.D.N.J."/>
            <person name="Drysdale R.A."/>
            <person name="Harris N.L."/>
            <person name="Richter J."/>
            <person name="Russo S."/>
            <person name="Schroeder A.J."/>
            <person name="Shu S.Q."/>
            <person name="Stapleton M."/>
            <person name="Yamada C."/>
            <person name="Ashburner M."/>
            <person name="Gelbart W.M."/>
            <person name="Rubin G.M."/>
            <person name="Lewis S.E."/>
        </authorList>
    </citation>
    <scope>GENOME REANNOTATION</scope>
    <source>
        <strain>Berkeley</strain>
    </source>
</reference>
<reference key="3">
    <citation type="journal article" date="2002" name="Genome Biol.">
        <title>A Drosophila full-length cDNA resource.</title>
        <authorList>
            <person name="Stapleton M."/>
            <person name="Carlson J.W."/>
            <person name="Brokstein P."/>
            <person name="Yu C."/>
            <person name="Champe M."/>
            <person name="George R.A."/>
            <person name="Guarin H."/>
            <person name="Kronmiller B."/>
            <person name="Pacleb J.M."/>
            <person name="Park S."/>
            <person name="Wan K.H."/>
            <person name="Rubin G.M."/>
            <person name="Celniker S.E."/>
        </authorList>
    </citation>
    <scope>NUCLEOTIDE SEQUENCE [LARGE SCALE MRNA]</scope>
    <source>
        <strain>Berkeley</strain>
        <tissue>Embryo</tissue>
    </source>
</reference>
<evidence type="ECO:0000255" key="1"/>
<evidence type="ECO:0000305" key="2"/>
<evidence type="ECO:0000312" key="3">
    <source>
        <dbReference type="FlyBase" id="FBgn0031670"/>
    </source>
</evidence>
<protein>
    <recommendedName>
        <fullName evidence="2">Thioredoxin reductase-like selenoprotein T homolog CG3887</fullName>
        <ecNumber evidence="2">1.8.1.9</ecNumber>
    </recommendedName>
</protein>
<keyword id="KW-1015">Disulfide bond</keyword>
<keyword id="KW-0521">NADP</keyword>
<keyword id="KW-0560">Oxidoreductase</keyword>
<keyword id="KW-0676">Redox-active center</keyword>
<keyword id="KW-1185">Reference proteome</keyword>
<keyword id="KW-0732">Signal</keyword>
<feature type="signal peptide" evidence="1">
    <location>
        <begin position="1"/>
        <end position="25"/>
    </location>
</feature>
<feature type="chain" id="PRO_0000032295" description="Thioredoxin reductase-like selenoprotein T homolog CG3887">
    <location>
        <begin position="26"/>
        <end position="198"/>
    </location>
</feature>
<feature type="disulfide bond" description="Redox-active" evidence="1">
    <location>
        <begin position="49"/>
        <end position="52"/>
    </location>
</feature>
<dbReference type="EC" id="1.8.1.9" evidence="2"/>
<dbReference type="EMBL" id="AE014134">
    <property type="protein sequence ID" value="AAF52202.1"/>
    <property type="molecule type" value="Genomic_DNA"/>
</dbReference>
<dbReference type="EMBL" id="AY061409">
    <property type="protein sequence ID" value="AAL28957.1"/>
    <property type="molecule type" value="mRNA"/>
</dbReference>
<dbReference type="RefSeq" id="NP_001260069.1">
    <property type="nucleotide sequence ID" value="NM_001273140.1"/>
</dbReference>
<dbReference type="RefSeq" id="NP_001260070.1">
    <property type="nucleotide sequence ID" value="NM_001273141.1"/>
</dbReference>
<dbReference type="RefSeq" id="NP_608897.1">
    <property type="nucleotide sequence ID" value="NM_135053.4"/>
</dbReference>
<dbReference type="BioGRID" id="59906">
    <property type="interactions" value="5"/>
</dbReference>
<dbReference type="FunCoup" id="Q9VMV6">
    <property type="interactions" value="1019"/>
</dbReference>
<dbReference type="IntAct" id="Q9VMV6">
    <property type="interactions" value="23"/>
</dbReference>
<dbReference type="STRING" id="7227.FBpp0304685"/>
<dbReference type="PaxDb" id="7227-FBpp0304685"/>
<dbReference type="DNASU" id="33725"/>
<dbReference type="EnsemblMetazoa" id="FBtr0079000">
    <property type="protein sequence ID" value="FBpp0078639"/>
    <property type="gene ID" value="FBgn0031670"/>
</dbReference>
<dbReference type="EnsemblMetazoa" id="FBtr0332411">
    <property type="protein sequence ID" value="FBpp0304684"/>
    <property type="gene ID" value="FBgn0031670"/>
</dbReference>
<dbReference type="EnsemblMetazoa" id="FBtr0332412">
    <property type="protein sequence ID" value="FBpp0304685"/>
    <property type="gene ID" value="FBgn0031670"/>
</dbReference>
<dbReference type="GeneID" id="33725"/>
<dbReference type="KEGG" id="dme:Dmel_CG3887"/>
<dbReference type="UCSC" id="CG3887-RA">
    <property type="organism name" value="d. melanogaster"/>
</dbReference>
<dbReference type="AGR" id="FB:FBgn0031670"/>
<dbReference type="CTD" id="33725"/>
<dbReference type="FlyBase" id="FBgn0031670">
    <property type="gene designation" value="SelT"/>
</dbReference>
<dbReference type="VEuPathDB" id="VectorBase:FBgn0031670"/>
<dbReference type="eggNOG" id="KOG3286">
    <property type="taxonomic scope" value="Eukaryota"/>
</dbReference>
<dbReference type="GeneTree" id="ENSGT00390000011725"/>
<dbReference type="HOGENOM" id="CLU_113870_1_0_1"/>
<dbReference type="InParanoid" id="Q9VMV6"/>
<dbReference type="OMA" id="SWWSHLQ"/>
<dbReference type="OrthoDB" id="60822at2759"/>
<dbReference type="PhylomeDB" id="Q9VMV6"/>
<dbReference type="BioGRID-ORCS" id="33725">
    <property type="hits" value="0 hits in 1 CRISPR screen"/>
</dbReference>
<dbReference type="GenomeRNAi" id="33725"/>
<dbReference type="PRO" id="PR:Q9VMV6"/>
<dbReference type="Proteomes" id="UP000000803">
    <property type="component" value="Chromosome 2L"/>
</dbReference>
<dbReference type="Bgee" id="FBgn0031670">
    <property type="expression patterns" value="Expressed in eye disc (Drosophila) and 173 other cell types or tissues"/>
</dbReference>
<dbReference type="ExpressionAtlas" id="Q9VMV6">
    <property type="expression patterns" value="baseline and differential"/>
</dbReference>
<dbReference type="GO" id="GO:0012505">
    <property type="term" value="C:endomembrane system"/>
    <property type="evidence" value="ECO:0007005"/>
    <property type="project" value="FlyBase"/>
</dbReference>
<dbReference type="GO" id="GO:0005789">
    <property type="term" value="C:endoplasmic reticulum membrane"/>
    <property type="evidence" value="ECO:0000318"/>
    <property type="project" value="GO_Central"/>
</dbReference>
<dbReference type="GO" id="GO:0004791">
    <property type="term" value="F:thioredoxin-disulfide reductase (NADPH) activity"/>
    <property type="evidence" value="ECO:0000250"/>
    <property type="project" value="FlyBase"/>
</dbReference>
<dbReference type="GO" id="GO:0045454">
    <property type="term" value="P:cell redox homeostasis"/>
    <property type="evidence" value="ECO:0000318"/>
    <property type="project" value="GO_Central"/>
</dbReference>
<dbReference type="Gene3D" id="3.40.30.10">
    <property type="entry name" value="Glutaredoxin"/>
    <property type="match status" value="1"/>
</dbReference>
<dbReference type="InterPro" id="IPR011893">
    <property type="entry name" value="Selenoprotein_Rdx-typ"/>
</dbReference>
<dbReference type="InterPro" id="IPR019389">
    <property type="entry name" value="Selenoprotein_T"/>
</dbReference>
<dbReference type="InterPro" id="IPR036249">
    <property type="entry name" value="Thioredoxin-like_sf"/>
</dbReference>
<dbReference type="NCBIfam" id="TIGR02174">
    <property type="entry name" value="CXXU_selWTH"/>
    <property type="match status" value="1"/>
</dbReference>
<dbReference type="PANTHER" id="PTHR13544">
    <property type="entry name" value="SELENOPROTEIN T"/>
    <property type="match status" value="1"/>
</dbReference>
<dbReference type="PANTHER" id="PTHR13544:SF0">
    <property type="entry name" value="THIOREDOXIN REDUCTASE-LIKE SELENOPROTEIN T"/>
    <property type="match status" value="1"/>
</dbReference>
<dbReference type="Pfam" id="PF10262">
    <property type="entry name" value="Rdx"/>
    <property type="match status" value="1"/>
</dbReference>
<dbReference type="SUPFAM" id="SSF52833">
    <property type="entry name" value="Thioredoxin-like"/>
    <property type="match status" value="1"/>
</dbReference>
<organism>
    <name type="scientific">Drosophila melanogaster</name>
    <name type="common">Fruit fly</name>
    <dbReference type="NCBI Taxonomy" id="7227"/>
    <lineage>
        <taxon>Eukaryota</taxon>
        <taxon>Metazoa</taxon>
        <taxon>Ecdysozoa</taxon>
        <taxon>Arthropoda</taxon>
        <taxon>Hexapoda</taxon>
        <taxon>Insecta</taxon>
        <taxon>Pterygota</taxon>
        <taxon>Neoptera</taxon>
        <taxon>Endopterygota</taxon>
        <taxon>Diptera</taxon>
        <taxon>Brachycera</taxon>
        <taxon>Muscomorpha</taxon>
        <taxon>Ephydroidea</taxon>
        <taxon>Drosophilidae</taxon>
        <taxon>Drosophila</taxon>
        <taxon>Sophophora</taxon>
    </lineage>
</organism>
<gene>
    <name evidence="3" type="primary">SelT</name>
    <name evidence="3" type="ORF">CG3887</name>
</gene>
<proteinExistence type="evidence at transcript level"/>
<sequence length="198" mass="22323">MERLTGRNVALLVLCLCAGYALVFAEGEKEIPVTKFGQNIAPTMTFLYCYSCGYRKAFEDYVGLLGEKYPQIQVNGGNYDPPGLNYYLSKMIFALKIIIIVSVVSAVSPFTFLGLNTPSWWSHMQANKIYACMMIFFLGNMLEAQLISSGAFEITLNDVPVWSKLQTGRFPSPEVLFQIIDNHLQFTEKVQENPDFVK</sequence>
<name>SELT_DROME</name>
<accession>Q9VMV6</accession>